<keyword id="KW-0413">Isomerase</keyword>
<keyword id="KW-1185">Reference proteome</keyword>
<keyword id="KW-0697">Rotamase</keyword>
<proteinExistence type="inferred from homology"/>
<dbReference type="EC" id="5.2.1.8"/>
<dbReference type="EMBL" id="AAHF01000012">
    <property type="protein sequence ID" value="EAL85825.1"/>
    <property type="molecule type" value="Genomic_DNA"/>
</dbReference>
<dbReference type="RefSeq" id="XP_747863.1">
    <property type="nucleotide sequence ID" value="XM_742770.1"/>
</dbReference>
<dbReference type="SMR" id="Q4WCR3"/>
<dbReference type="STRING" id="330879.Q4WCR3"/>
<dbReference type="EnsemblFungi" id="EAL85825">
    <property type="protein sequence ID" value="EAL85825"/>
    <property type="gene ID" value="AFUA_6G02140"/>
</dbReference>
<dbReference type="GeneID" id="3505247"/>
<dbReference type="KEGG" id="afm:AFUA_6G02140"/>
<dbReference type="VEuPathDB" id="FungiDB:Afu6g02140"/>
<dbReference type="eggNOG" id="KOG0881">
    <property type="taxonomic scope" value="Eukaryota"/>
</dbReference>
<dbReference type="HOGENOM" id="CLU_012062_16_3_1"/>
<dbReference type="InParanoid" id="Q4WCR3"/>
<dbReference type="OMA" id="ELYNDHA"/>
<dbReference type="OrthoDB" id="271386at2759"/>
<dbReference type="Proteomes" id="UP000002530">
    <property type="component" value="Chromosome 6"/>
</dbReference>
<dbReference type="GO" id="GO:0071013">
    <property type="term" value="C:catalytic step 2 spliceosome"/>
    <property type="evidence" value="ECO:0000318"/>
    <property type="project" value="GO_Central"/>
</dbReference>
<dbReference type="GO" id="GO:0003755">
    <property type="term" value="F:peptidyl-prolyl cis-trans isomerase activity"/>
    <property type="evidence" value="ECO:0000318"/>
    <property type="project" value="GO_Central"/>
</dbReference>
<dbReference type="GO" id="GO:0000398">
    <property type="term" value="P:mRNA splicing, via spliceosome"/>
    <property type="evidence" value="ECO:0000318"/>
    <property type="project" value="GO_Central"/>
</dbReference>
<dbReference type="GO" id="GO:0006457">
    <property type="term" value="P:protein folding"/>
    <property type="evidence" value="ECO:0000318"/>
    <property type="project" value="GO_Central"/>
</dbReference>
<dbReference type="FunFam" id="2.40.100.10:FF:000008">
    <property type="entry name" value="Peptidyl-prolyl cis-trans isomerase"/>
    <property type="match status" value="1"/>
</dbReference>
<dbReference type="Gene3D" id="2.40.100.10">
    <property type="entry name" value="Cyclophilin-like"/>
    <property type="match status" value="1"/>
</dbReference>
<dbReference type="InterPro" id="IPR029000">
    <property type="entry name" value="Cyclophilin-like_dom_sf"/>
</dbReference>
<dbReference type="InterPro" id="IPR024936">
    <property type="entry name" value="Cyclophilin-type_PPIase"/>
</dbReference>
<dbReference type="InterPro" id="IPR020892">
    <property type="entry name" value="Cyclophilin-type_PPIase_CS"/>
</dbReference>
<dbReference type="InterPro" id="IPR002130">
    <property type="entry name" value="Cyclophilin-type_PPIase_dom"/>
</dbReference>
<dbReference type="InterPro" id="IPR044666">
    <property type="entry name" value="Cyclophilin_A-like"/>
</dbReference>
<dbReference type="PANTHER" id="PTHR45625">
    <property type="entry name" value="PEPTIDYL-PROLYL CIS-TRANS ISOMERASE-RELATED"/>
    <property type="match status" value="1"/>
</dbReference>
<dbReference type="PANTHER" id="PTHR45625:SF4">
    <property type="entry name" value="PEPTIDYLPROLYL ISOMERASE DOMAIN AND WD REPEAT-CONTAINING PROTEIN 1"/>
    <property type="match status" value="1"/>
</dbReference>
<dbReference type="Pfam" id="PF00160">
    <property type="entry name" value="Pro_isomerase"/>
    <property type="match status" value="1"/>
</dbReference>
<dbReference type="PIRSF" id="PIRSF001467">
    <property type="entry name" value="Peptidylpro_ismrse"/>
    <property type="match status" value="1"/>
</dbReference>
<dbReference type="PRINTS" id="PR00153">
    <property type="entry name" value="CSAPPISMRASE"/>
</dbReference>
<dbReference type="SUPFAM" id="SSF50891">
    <property type="entry name" value="Cyclophilin-like"/>
    <property type="match status" value="1"/>
</dbReference>
<dbReference type="PROSITE" id="PS00170">
    <property type="entry name" value="CSA_PPIASE_1"/>
    <property type="match status" value="1"/>
</dbReference>
<dbReference type="PROSITE" id="PS50072">
    <property type="entry name" value="CSA_PPIASE_2"/>
    <property type="match status" value="1"/>
</dbReference>
<sequence>MATDVVFDTSMGSFTVELYNEHAPKTCRNFATLAQRGYYNNVIFHRIIPNFMVQTGDPTGTGRGGSSIYGEKFEDEIHPGLKHTGAGVLSMANSGPNTNGSQFFITLAPTPWLDGKHTIFGRVKSGMRVIQRMGLVKTNSEDRPVDEVKIIRAKVVEEGDE</sequence>
<name>PPIL1_ASPFU</name>
<reference key="1">
    <citation type="journal article" date="2005" name="Nature">
        <title>Genomic sequence of the pathogenic and allergenic filamentous fungus Aspergillus fumigatus.</title>
        <authorList>
            <person name="Nierman W.C."/>
            <person name="Pain A."/>
            <person name="Anderson M.J."/>
            <person name="Wortman J.R."/>
            <person name="Kim H.S."/>
            <person name="Arroyo J."/>
            <person name="Berriman M."/>
            <person name="Abe K."/>
            <person name="Archer D.B."/>
            <person name="Bermejo C."/>
            <person name="Bennett J.W."/>
            <person name="Bowyer P."/>
            <person name="Chen D."/>
            <person name="Collins M."/>
            <person name="Coulsen R."/>
            <person name="Davies R."/>
            <person name="Dyer P.S."/>
            <person name="Farman M.L."/>
            <person name="Fedorova N."/>
            <person name="Fedorova N.D."/>
            <person name="Feldblyum T.V."/>
            <person name="Fischer R."/>
            <person name="Fosker N."/>
            <person name="Fraser A."/>
            <person name="Garcia J.L."/>
            <person name="Garcia M.J."/>
            <person name="Goble A."/>
            <person name="Goldman G.H."/>
            <person name="Gomi K."/>
            <person name="Griffith-Jones S."/>
            <person name="Gwilliam R."/>
            <person name="Haas B.J."/>
            <person name="Haas H."/>
            <person name="Harris D.E."/>
            <person name="Horiuchi H."/>
            <person name="Huang J."/>
            <person name="Humphray S."/>
            <person name="Jimenez J."/>
            <person name="Keller N."/>
            <person name="Khouri H."/>
            <person name="Kitamoto K."/>
            <person name="Kobayashi T."/>
            <person name="Konzack S."/>
            <person name="Kulkarni R."/>
            <person name="Kumagai T."/>
            <person name="Lafton A."/>
            <person name="Latge J.-P."/>
            <person name="Li W."/>
            <person name="Lord A."/>
            <person name="Lu C."/>
            <person name="Majoros W.H."/>
            <person name="May G.S."/>
            <person name="Miller B.L."/>
            <person name="Mohamoud Y."/>
            <person name="Molina M."/>
            <person name="Monod M."/>
            <person name="Mouyna I."/>
            <person name="Mulligan S."/>
            <person name="Murphy L.D."/>
            <person name="O'Neil S."/>
            <person name="Paulsen I."/>
            <person name="Penalva M.A."/>
            <person name="Pertea M."/>
            <person name="Price C."/>
            <person name="Pritchard B.L."/>
            <person name="Quail M.A."/>
            <person name="Rabbinowitsch E."/>
            <person name="Rawlins N."/>
            <person name="Rajandream M.A."/>
            <person name="Reichard U."/>
            <person name="Renauld H."/>
            <person name="Robson G.D."/>
            <person name="Rodriguez de Cordoba S."/>
            <person name="Rodriguez-Pena J.M."/>
            <person name="Ronning C.M."/>
            <person name="Rutter S."/>
            <person name="Salzberg S.L."/>
            <person name="Sanchez M."/>
            <person name="Sanchez-Ferrero J.C."/>
            <person name="Saunders D."/>
            <person name="Seeger K."/>
            <person name="Squares R."/>
            <person name="Squares S."/>
            <person name="Takeuchi M."/>
            <person name="Tekaia F."/>
            <person name="Turner G."/>
            <person name="Vazquez de Aldana C.R."/>
            <person name="Weidman J."/>
            <person name="White O."/>
            <person name="Woodward J.R."/>
            <person name="Yu J.-H."/>
            <person name="Fraser C.M."/>
            <person name="Galagan J.E."/>
            <person name="Asai K."/>
            <person name="Machida M."/>
            <person name="Hall N."/>
            <person name="Barrell B.G."/>
            <person name="Denning D.W."/>
        </authorList>
    </citation>
    <scope>NUCLEOTIDE SEQUENCE [LARGE SCALE GENOMIC DNA]</scope>
    <source>
        <strain>ATCC MYA-4609 / CBS 101355 / FGSC A1100 / Af293</strain>
    </source>
</reference>
<comment type="function">
    <text evidence="1">PPIases accelerate the folding of proteins. It catalyzes the cis-trans isomerization of proline imidic peptide bonds in oligopeptides (By similarity).</text>
</comment>
<comment type="catalytic activity">
    <reaction>
        <text>[protein]-peptidylproline (omega=180) = [protein]-peptidylproline (omega=0)</text>
        <dbReference type="Rhea" id="RHEA:16237"/>
        <dbReference type="Rhea" id="RHEA-COMP:10747"/>
        <dbReference type="Rhea" id="RHEA-COMP:10748"/>
        <dbReference type="ChEBI" id="CHEBI:83833"/>
        <dbReference type="ChEBI" id="CHEBI:83834"/>
        <dbReference type="EC" id="5.2.1.8"/>
    </reaction>
</comment>
<comment type="similarity">
    <text evidence="3">Belongs to the cyclophilin-type PPIase family. PPIL1 subfamily.</text>
</comment>
<gene>
    <name type="primary">cyp1</name>
    <name type="ORF">AFUA_6G02140</name>
</gene>
<evidence type="ECO:0000250" key="1"/>
<evidence type="ECO:0000255" key="2">
    <source>
        <dbReference type="PROSITE-ProRule" id="PRU00156"/>
    </source>
</evidence>
<evidence type="ECO:0000305" key="3"/>
<accession>Q4WCR3</accession>
<feature type="chain" id="PRO_0000232961" description="Peptidyl-prolyl cis-trans isomerase-like 1">
    <location>
        <begin position="1"/>
        <end position="161"/>
    </location>
</feature>
<feature type="domain" description="PPIase cyclophilin-type" evidence="2">
    <location>
        <begin position="1"/>
        <end position="155"/>
    </location>
</feature>
<organism>
    <name type="scientific">Aspergillus fumigatus (strain ATCC MYA-4609 / CBS 101355 / FGSC A1100 / Af293)</name>
    <name type="common">Neosartorya fumigata</name>
    <dbReference type="NCBI Taxonomy" id="330879"/>
    <lineage>
        <taxon>Eukaryota</taxon>
        <taxon>Fungi</taxon>
        <taxon>Dikarya</taxon>
        <taxon>Ascomycota</taxon>
        <taxon>Pezizomycotina</taxon>
        <taxon>Eurotiomycetes</taxon>
        <taxon>Eurotiomycetidae</taxon>
        <taxon>Eurotiales</taxon>
        <taxon>Aspergillaceae</taxon>
        <taxon>Aspergillus</taxon>
        <taxon>Aspergillus subgen. Fumigati</taxon>
    </lineage>
</organism>
<protein>
    <recommendedName>
        <fullName>Peptidyl-prolyl cis-trans isomerase-like 1</fullName>
        <shortName>PPIase</shortName>
        <ecNumber>5.2.1.8</ecNumber>
    </recommendedName>
    <alternativeName>
        <fullName>Rotamase</fullName>
    </alternativeName>
</protein>